<comment type="function">
    <text evidence="1">Binds 23S rRNA and is also seen to make contacts with the A and possibly P site tRNAs.</text>
</comment>
<comment type="subunit">
    <text evidence="1">Part of the 50S ribosomal subunit.</text>
</comment>
<comment type="similarity">
    <text evidence="1">Belongs to the universal ribosomal protein uL16 family.</text>
</comment>
<proteinExistence type="inferred from homology"/>
<reference key="1">
    <citation type="submission" date="2006-03" db="EMBL/GenBank/DDBJ databases">
        <title>Complete sequence of chromosome of Psychrobacter cryohalolentis K5.</title>
        <authorList>
            <consortium name="US DOE Joint Genome Institute"/>
            <person name="Copeland A."/>
            <person name="Lucas S."/>
            <person name="Lapidus A."/>
            <person name="Barry K."/>
            <person name="Detter J.C."/>
            <person name="Glavina T."/>
            <person name="Hammon N."/>
            <person name="Israni S."/>
            <person name="Dalin E."/>
            <person name="Tice H."/>
            <person name="Pitluck S."/>
            <person name="Brettin T."/>
            <person name="Bruce D."/>
            <person name="Han C."/>
            <person name="Tapia R."/>
            <person name="Sims D.R."/>
            <person name="Gilna P."/>
            <person name="Schmutz J."/>
            <person name="Larimer F."/>
            <person name="Land M."/>
            <person name="Hauser L."/>
            <person name="Kyrpides N."/>
            <person name="Kim E."/>
            <person name="Richardson P."/>
        </authorList>
    </citation>
    <scope>NUCLEOTIDE SEQUENCE [LARGE SCALE GENOMIC DNA]</scope>
    <source>
        <strain>ATCC BAA-1226 / DSM 17306 / VKM B-2378 / K5</strain>
    </source>
</reference>
<name>RL16_PSYCK</name>
<protein>
    <recommendedName>
        <fullName evidence="1">Large ribosomal subunit protein uL16</fullName>
    </recommendedName>
    <alternativeName>
        <fullName evidence="2">50S ribosomal protein L16</fullName>
    </alternativeName>
</protein>
<dbReference type="EMBL" id="CP000323">
    <property type="protein sequence ID" value="ABE74274.1"/>
    <property type="molecule type" value="Genomic_DNA"/>
</dbReference>
<dbReference type="RefSeq" id="WP_011512855.1">
    <property type="nucleotide sequence ID" value="NC_007969.1"/>
</dbReference>
<dbReference type="SMR" id="Q1QDH9"/>
<dbReference type="STRING" id="335284.Pcryo_0491"/>
<dbReference type="KEGG" id="pcr:Pcryo_0491"/>
<dbReference type="eggNOG" id="COG0197">
    <property type="taxonomic scope" value="Bacteria"/>
</dbReference>
<dbReference type="HOGENOM" id="CLU_078858_2_1_6"/>
<dbReference type="Proteomes" id="UP000002425">
    <property type="component" value="Chromosome"/>
</dbReference>
<dbReference type="GO" id="GO:0022625">
    <property type="term" value="C:cytosolic large ribosomal subunit"/>
    <property type="evidence" value="ECO:0007669"/>
    <property type="project" value="TreeGrafter"/>
</dbReference>
<dbReference type="GO" id="GO:0019843">
    <property type="term" value="F:rRNA binding"/>
    <property type="evidence" value="ECO:0007669"/>
    <property type="project" value="UniProtKB-UniRule"/>
</dbReference>
<dbReference type="GO" id="GO:0003735">
    <property type="term" value="F:structural constituent of ribosome"/>
    <property type="evidence" value="ECO:0007669"/>
    <property type="project" value="InterPro"/>
</dbReference>
<dbReference type="GO" id="GO:0000049">
    <property type="term" value="F:tRNA binding"/>
    <property type="evidence" value="ECO:0007669"/>
    <property type="project" value="UniProtKB-KW"/>
</dbReference>
<dbReference type="GO" id="GO:0006412">
    <property type="term" value="P:translation"/>
    <property type="evidence" value="ECO:0007669"/>
    <property type="project" value="UniProtKB-UniRule"/>
</dbReference>
<dbReference type="CDD" id="cd01433">
    <property type="entry name" value="Ribosomal_L16_L10e"/>
    <property type="match status" value="1"/>
</dbReference>
<dbReference type="FunFam" id="3.90.1170.10:FF:000001">
    <property type="entry name" value="50S ribosomal protein L16"/>
    <property type="match status" value="1"/>
</dbReference>
<dbReference type="Gene3D" id="3.90.1170.10">
    <property type="entry name" value="Ribosomal protein L10e/L16"/>
    <property type="match status" value="1"/>
</dbReference>
<dbReference type="HAMAP" id="MF_01342">
    <property type="entry name" value="Ribosomal_uL16"/>
    <property type="match status" value="1"/>
</dbReference>
<dbReference type="InterPro" id="IPR047873">
    <property type="entry name" value="Ribosomal_uL16"/>
</dbReference>
<dbReference type="InterPro" id="IPR000114">
    <property type="entry name" value="Ribosomal_uL16_bact-type"/>
</dbReference>
<dbReference type="InterPro" id="IPR020798">
    <property type="entry name" value="Ribosomal_uL16_CS"/>
</dbReference>
<dbReference type="InterPro" id="IPR016180">
    <property type="entry name" value="Ribosomal_uL16_dom"/>
</dbReference>
<dbReference type="InterPro" id="IPR036920">
    <property type="entry name" value="Ribosomal_uL16_sf"/>
</dbReference>
<dbReference type="NCBIfam" id="TIGR01164">
    <property type="entry name" value="rplP_bact"/>
    <property type="match status" value="1"/>
</dbReference>
<dbReference type="PANTHER" id="PTHR12220">
    <property type="entry name" value="50S/60S RIBOSOMAL PROTEIN L16"/>
    <property type="match status" value="1"/>
</dbReference>
<dbReference type="PANTHER" id="PTHR12220:SF13">
    <property type="entry name" value="LARGE RIBOSOMAL SUBUNIT PROTEIN UL16M"/>
    <property type="match status" value="1"/>
</dbReference>
<dbReference type="Pfam" id="PF00252">
    <property type="entry name" value="Ribosomal_L16"/>
    <property type="match status" value="1"/>
</dbReference>
<dbReference type="PRINTS" id="PR00060">
    <property type="entry name" value="RIBOSOMALL16"/>
</dbReference>
<dbReference type="SUPFAM" id="SSF54686">
    <property type="entry name" value="Ribosomal protein L16p/L10e"/>
    <property type="match status" value="1"/>
</dbReference>
<dbReference type="PROSITE" id="PS00586">
    <property type="entry name" value="RIBOSOMAL_L16_1"/>
    <property type="match status" value="1"/>
</dbReference>
<dbReference type="PROSITE" id="PS00701">
    <property type="entry name" value="RIBOSOMAL_L16_2"/>
    <property type="match status" value="1"/>
</dbReference>
<gene>
    <name evidence="1" type="primary">rplP</name>
    <name type="ordered locus">Pcryo_0491</name>
</gene>
<sequence>MLQPKRTKFRKMHKGRNTGLAHRGSTVAFGQIGLKSLTRGRMTARQIEAARRTITRKIKRGGKIWIRVFPDKPITNKPLEVRMGKGKGPVEYWVCEIKPGKILYELEGISEELAREALTLAAAKLPFKTTIVKRTIM</sequence>
<organism>
    <name type="scientific">Psychrobacter cryohalolentis (strain ATCC BAA-1226 / DSM 17306 / VKM B-2378 / K5)</name>
    <dbReference type="NCBI Taxonomy" id="335284"/>
    <lineage>
        <taxon>Bacteria</taxon>
        <taxon>Pseudomonadati</taxon>
        <taxon>Pseudomonadota</taxon>
        <taxon>Gammaproteobacteria</taxon>
        <taxon>Moraxellales</taxon>
        <taxon>Moraxellaceae</taxon>
        <taxon>Psychrobacter</taxon>
    </lineage>
</organism>
<accession>Q1QDH9</accession>
<evidence type="ECO:0000255" key="1">
    <source>
        <dbReference type="HAMAP-Rule" id="MF_01342"/>
    </source>
</evidence>
<evidence type="ECO:0000305" key="2"/>
<keyword id="KW-0687">Ribonucleoprotein</keyword>
<keyword id="KW-0689">Ribosomal protein</keyword>
<keyword id="KW-0694">RNA-binding</keyword>
<keyword id="KW-0699">rRNA-binding</keyword>
<keyword id="KW-0820">tRNA-binding</keyword>
<feature type="chain" id="PRO_0000251656" description="Large ribosomal subunit protein uL16">
    <location>
        <begin position="1"/>
        <end position="137"/>
    </location>
</feature>